<feature type="chain" id="PRO_1000021902" description="Homoserine O-acetyltransferase">
    <location>
        <begin position="1"/>
        <end position="400"/>
    </location>
</feature>
<feature type="domain" description="AB hydrolase-1" evidence="1">
    <location>
        <begin position="64"/>
        <end position="373"/>
    </location>
</feature>
<feature type="region of interest" description="Disordered" evidence="2">
    <location>
        <begin position="1"/>
        <end position="24"/>
    </location>
</feature>
<feature type="compositionally biased region" description="Polar residues" evidence="2">
    <location>
        <begin position="1"/>
        <end position="11"/>
    </location>
</feature>
<feature type="compositionally biased region" description="Basic and acidic residues" evidence="2">
    <location>
        <begin position="13"/>
        <end position="23"/>
    </location>
</feature>
<feature type="active site" description="Nucleophile" evidence="1">
    <location>
        <position position="169"/>
    </location>
</feature>
<feature type="active site" evidence="1">
    <location>
        <position position="335"/>
    </location>
</feature>
<feature type="active site" evidence="1">
    <location>
        <position position="368"/>
    </location>
</feature>
<feature type="binding site" evidence="1">
    <location>
        <position position="239"/>
    </location>
    <ligand>
        <name>substrate</name>
    </ligand>
</feature>
<feature type="binding site" evidence="1">
    <location>
        <position position="369"/>
    </location>
    <ligand>
        <name>substrate</name>
    </ligand>
</feature>
<comment type="function">
    <text evidence="1">Transfers an acetyl group from acetyl-CoA to L-homoserine, forming acetyl-L-homoserine.</text>
</comment>
<comment type="catalytic activity">
    <reaction evidence="1">
        <text>L-homoserine + acetyl-CoA = O-acetyl-L-homoserine + CoA</text>
        <dbReference type="Rhea" id="RHEA:13701"/>
        <dbReference type="ChEBI" id="CHEBI:57287"/>
        <dbReference type="ChEBI" id="CHEBI:57288"/>
        <dbReference type="ChEBI" id="CHEBI:57476"/>
        <dbReference type="ChEBI" id="CHEBI:57716"/>
        <dbReference type="EC" id="2.3.1.31"/>
    </reaction>
</comment>
<comment type="pathway">
    <text evidence="1">Amino-acid biosynthesis; L-methionine biosynthesis via de novo pathway; O-acetyl-L-homoserine from L-homoserine: step 1/1.</text>
</comment>
<comment type="subunit">
    <text evidence="1">Homodimer.</text>
</comment>
<comment type="subcellular location">
    <subcellularLocation>
        <location evidence="1">Cytoplasm</location>
    </subcellularLocation>
</comment>
<comment type="similarity">
    <text evidence="1">Belongs to the AB hydrolase superfamily. MetX family.</text>
</comment>
<dbReference type="EC" id="2.3.1.31" evidence="1"/>
<dbReference type="EMBL" id="CP000301">
    <property type="protein sequence ID" value="ABD89805.1"/>
    <property type="molecule type" value="Genomic_DNA"/>
</dbReference>
<dbReference type="SMR" id="Q20YI1"/>
<dbReference type="STRING" id="316056.RPC_4281"/>
<dbReference type="ESTHER" id="rhopb-q20yi1">
    <property type="family name" value="Homoserine_transacetylase"/>
</dbReference>
<dbReference type="KEGG" id="rpc:RPC_4281"/>
<dbReference type="eggNOG" id="COG2021">
    <property type="taxonomic scope" value="Bacteria"/>
</dbReference>
<dbReference type="HOGENOM" id="CLU_028760_1_2_5"/>
<dbReference type="OrthoDB" id="9800754at2"/>
<dbReference type="UniPathway" id="UPA00051">
    <property type="reaction ID" value="UER00074"/>
</dbReference>
<dbReference type="GO" id="GO:0005737">
    <property type="term" value="C:cytoplasm"/>
    <property type="evidence" value="ECO:0007669"/>
    <property type="project" value="UniProtKB-SubCell"/>
</dbReference>
<dbReference type="GO" id="GO:0004414">
    <property type="term" value="F:homoserine O-acetyltransferase activity"/>
    <property type="evidence" value="ECO:0007669"/>
    <property type="project" value="UniProtKB-UniRule"/>
</dbReference>
<dbReference type="GO" id="GO:0009092">
    <property type="term" value="P:homoserine metabolic process"/>
    <property type="evidence" value="ECO:0007669"/>
    <property type="project" value="TreeGrafter"/>
</dbReference>
<dbReference type="GO" id="GO:0009086">
    <property type="term" value="P:methionine biosynthetic process"/>
    <property type="evidence" value="ECO:0007669"/>
    <property type="project" value="UniProtKB-UniRule"/>
</dbReference>
<dbReference type="FunFam" id="1.10.1740.110:FF:000001">
    <property type="entry name" value="Homoserine O-acetyltransferase"/>
    <property type="match status" value="1"/>
</dbReference>
<dbReference type="Gene3D" id="1.10.1740.110">
    <property type="match status" value="1"/>
</dbReference>
<dbReference type="Gene3D" id="3.40.50.1820">
    <property type="entry name" value="alpha/beta hydrolase"/>
    <property type="match status" value="1"/>
</dbReference>
<dbReference type="HAMAP" id="MF_00296">
    <property type="entry name" value="MetX_acyltransf"/>
    <property type="match status" value="1"/>
</dbReference>
<dbReference type="InterPro" id="IPR000073">
    <property type="entry name" value="AB_hydrolase_1"/>
</dbReference>
<dbReference type="InterPro" id="IPR029058">
    <property type="entry name" value="AB_hydrolase_fold"/>
</dbReference>
<dbReference type="InterPro" id="IPR008220">
    <property type="entry name" value="HAT_MetX-like"/>
</dbReference>
<dbReference type="NCBIfam" id="TIGR01392">
    <property type="entry name" value="homoserO_Ac_trn"/>
    <property type="match status" value="1"/>
</dbReference>
<dbReference type="NCBIfam" id="NF001209">
    <property type="entry name" value="PRK00175.1"/>
    <property type="match status" value="1"/>
</dbReference>
<dbReference type="PANTHER" id="PTHR32268">
    <property type="entry name" value="HOMOSERINE O-ACETYLTRANSFERASE"/>
    <property type="match status" value="1"/>
</dbReference>
<dbReference type="PANTHER" id="PTHR32268:SF11">
    <property type="entry name" value="HOMOSERINE O-ACETYLTRANSFERASE"/>
    <property type="match status" value="1"/>
</dbReference>
<dbReference type="Pfam" id="PF00561">
    <property type="entry name" value="Abhydrolase_1"/>
    <property type="match status" value="1"/>
</dbReference>
<dbReference type="PIRSF" id="PIRSF000443">
    <property type="entry name" value="Homoser_Ac_trans"/>
    <property type="match status" value="1"/>
</dbReference>
<dbReference type="SUPFAM" id="SSF53474">
    <property type="entry name" value="alpha/beta-Hydrolases"/>
    <property type="match status" value="1"/>
</dbReference>
<organism>
    <name type="scientific">Rhodopseudomonas palustris (strain BisB18)</name>
    <dbReference type="NCBI Taxonomy" id="316056"/>
    <lineage>
        <taxon>Bacteria</taxon>
        <taxon>Pseudomonadati</taxon>
        <taxon>Pseudomonadota</taxon>
        <taxon>Alphaproteobacteria</taxon>
        <taxon>Hyphomicrobiales</taxon>
        <taxon>Nitrobacteraceae</taxon>
        <taxon>Rhodopseudomonas</taxon>
    </lineage>
</organism>
<keyword id="KW-0012">Acyltransferase</keyword>
<keyword id="KW-0028">Amino-acid biosynthesis</keyword>
<keyword id="KW-0963">Cytoplasm</keyword>
<keyword id="KW-0486">Methionine biosynthesis</keyword>
<keyword id="KW-0808">Transferase</keyword>
<name>METXA_RHOPB</name>
<sequence length="400" mass="43976">MVKVQSIQSQAVHAEERAHEADHPSSQVALFGADQPLRLDCGVDLAPFQIAYQTYGALNADKSNAILVCHALTGDQHVANIHPVTGKPGWWQTLVGPGKPLDPERFFIICSNVIGSCMGSTGPSSTNPLTGKPWGLDFPIITIPDMVRAQAMLIDRLGIDRLFCVVGGSMGGMQTLQWSVAYPKRVASALAIACSTRHSAQNIAFHELGRQAVMADPEWHHGRYYEEGSYPHRGLGVARMAAHITYLSDAALHRKFGRRMQDRELPTFSFDADFQVESYLRYQGSSFVERFDANSYLYLTRAMDYFDIAADHDGVLAEAFRDTTTRFCVVSFTSDWLFPTSESRNVVHALNAGGARVSFAEIETDRGHDAFLLDVPEFVDIVRAFLQSAGVAHGLAGKGH</sequence>
<protein>
    <recommendedName>
        <fullName evidence="1">Homoserine O-acetyltransferase</fullName>
        <shortName evidence="1">HAT</shortName>
        <ecNumber evidence="1">2.3.1.31</ecNumber>
    </recommendedName>
    <alternativeName>
        <fullName evidence="1">Homoserine transacetylase</fullName>
        <shortName evidence="1">HTA</shortName>
    </alternativeName>
</protein>
<accession>Q20YI1</accession>
<gene>
    <name evidence="1" type="primary">metXA</name>
    <name type="ordered locus">RPC_4281</name>
</gene>
<evidence type="ECO:0000255" key="1">
    <source>
        <dbReference type="HAMAP-Rule" id="MF_00296"/>
    </source>
</evidence>
<evidence type="ECO:0000256" key="2">
    <source>
        <dbReference type="SAM" id="MobiDB-lite"/>
    </source>
</evidence>
<proteinExistence type="inferred from homology"/>
<reference key="1">
    <citation type="submission" date="2006-03" db="EMBL/GenBank/DDBJ databases">
        <title>Complete sequence of Rhodopseudomonas palustris BisB18.</title>
        <authorList>
            <consortium name="US DOE Joint Genome Institute"/>
            <person name="Copeland A."/>
            <person name="Lucas S."/>
            <person name="Lapidus A."/>
            <person name="Barry K."/>
            <person name="Detter J.C."/>
            <person name="Glavina del Rio T."/>
            <person name="Hammon N."/>
            <person name="Israni S."/>
            <person name="Dalin E."/>
            <person name="Tice H."/>
            <person name="Pitluck S."/>
            <person name="Chain P."/>
            <person name="Malfatti S."/>
            <person name="Shin M."/>
            <person name="Vergez L."/>
            <person name="Schmutz J."/>
            <person name="Larimer F."/>
            <person name="Land M."/>
            <person name="Hauser L."/>
            <person name="Pelletier D.A."/>
            <person name="Kyrpides N."/>
            <person name="Anderson I."/>
            <person name="Oda Y."/>
            <person name="Harwood C.S."/>
            <person name="Richardson P."/>
        </authorList>
    </citation>
    <scope>NUCLEOTIDE SEQUENCE [LARGE SCALE GENOMIC DNA]</scope>
    <source>
        <strain>BisB18</strain>
    </source>
</reference>